<reference key="1">
    <citation type="submission" date="2005-09" db="EMBL/GenBank/DDBJ databases">
        <authorList>
            <person name="Mural R.J."/>
            <person name="Adams M.D."/>
            <person name="Myers E.W."/>
            <person name="Smith H.O."/>
            <person name="Venter J.C."/>
        </authorList>
    </citation>
    <scope>NUCLEOTIDE SEQUENCE [LARGE SCALE GENOMIC DNA]</scope>
</reference>
<dbReference type="EMBL" id="CH473950">
    <property type="protein sequence ID" value="EDM15953.1"/>
    <property type="molecule type" value="Genomic_DNA"/>
</dbReference>
<dbReference type="RefSeq" id="NP_001124044.1">
    <property type="nucleotide sequence ID" value="NM_001130572.1"/>
</dbReference>
<dbReference type="SMR" id="D4A615"/>
<dbReference type="FunCoup" id="D4A615">
    <property type="interactions" value="1527"/>
</dbReference>
<dbReference type="STRING" id="10116.ENSRNOP00000019754"/>
<dbReference type="PhosphoSitePlus" id="D4A615"/>
<dbReference type="PaxDb" id="10116-ENSRNOP00000019754"/>
<dbReference type="Ensembl" id="ENSRNOT00000019754.5">
    <property type="protein sequence ID" value="ENSRNOP00000019754.3"/>
    <property type="gene ID" value="ENSRNOG00000014703.5"/>
</dbReference>
<dbReference type="GeneID" id="366953"/>
<dbReference type="KEGG" id="rno:366953"/>
<dbReference type="UCSC" id="RGD:1307483">
    <property type="organism name" value="rat"/>
</dbReference>
<dbReference type="AGR" id="RGD:1307483"/>
<dbReference type="CTD" id="4796"/>
<dbReference type="RGD" id="1307483">
    <property type="gene designation" value="Tonsl"/>
</dbReference>
<dbReference type="eggNOG" id="KOG0504">
    <property type="taxonomic scope" value="Eukaryota"/>
</dbReference>
<dbReference type="eggNOG" id="KOG4308">
    <property type="taxonomic scope" value="Eukaryota"/>
</dbReference>
<dbReference type="GeneTree" id="ENSGT00940000160188"/>
<dbReference type="HOGENOM" id="CLU_002128_0_0_1"/>
<dbReference type="InParanoid" id="D4A615"/>
<dbReference type="OMA" id="ITQHLAK"/>
<dbReference type="PhylomeDB" id="D4A615"/>
<dbReference type="TreeFam" id="TF326440"/>
<dbReference type="PRO" id="PR:D4A615"/>
<dbReference type="Proteomes" id="UP000002494">
    <property type="component" value="Chromosome 7"/>
</dbReference>
<dbReference type="Proteomes" id="UP000234681">
    <property type="component" value="Chromosome 7"/>
</dbReference>
<dbReference type="Bgee" id="ENSRNOG00000014703">
    <property type="expression patterns" value="Expressed in thymus and 15 other cell types or tissues"/>
</dbReference>
<dbReference type="GO" id="GO:0005737">
    <property type="term" value="C:cytoplasm"/>
    <property type="evidence" value="ECO:0007669"/>
    <property type="project" value="UniProtKB-SubCell"/>
</dbReference>
<dbReference type="GO" id="GO:0005662">
    <property type="term" value="C:DNA replication factor A complex"/>
    <property type="evidence" value="ECO:0000266"/>
    <property type="project" value="RGD"/>
</dbReference>
<dbReference type="GO" id="GO:0035101">
    <property type="term" value="C:FACT complex"/>
    <property type="evidence" value="ECO:0000266"/>
    <property type="project" value="RGD"/>
</dbReference>
<dbReference type="GO" id="GO:0042555">
    <property type="term" value="C:MCM complex"/>
    <property type="evidence" value="ECO:0000266"/>
    <property type="project" value="RGD"/>
</dbReference>
<dbReference type="GO" id="GO:0016604">
    <property type="term" value="C:nuclear body"/>
    <property type="evidence" value="ECO:0007669"/>
    <property type="project" value="Ensembl"/>
</dbReference>
<dbReference type="GO" id="GO:0043596">
    <property type="term" value="C:nuclear replication fork"/>
    <property type="evidence" value="ECO:0000250"/>
    <property type="project" value="UniProtKB"/>
</dbReference>
<dbReference type="GO" id="GO:0035861">
    <property type="term" value="C:site of double-strand break"/>
    <property type="evidence" value="ECO:0000250"/>
    <property type="project" value="UniProtKB"/>
</dbReference>
<dbReference type="GO" id="GO:0042393">
    <property type="term" value="F:histone binding"/>
    <property type="evidence" value="ECO:0000250"/>
    <property type="project" value="UniProtKB"/>
</dbReference>
<dbReference type="GO" id="GO:0140566">
    <property type="term" value="F:histone reader activity"/>
    <property type="evidence" value="ECO:0000250"/>
    <property type="project" value="UniProtKB"/>
</dbReference>
<dbReference type="GO" id="GO:0000724">
    <property type="term" value="P:double-strand break repair via homologous recombination"/>
    <property type="evidence" value="ECO:0000250"/>
    <property type="project" value="UniProtKB"/>
</dbReference>
<dbReference type="GO" id="GO:0071168">
    <property type="term" value="P:protein localization to chromatin"/>
    <property type="evidence" value="ECO:0000266"/>
    <property type="project" value="RGD"/>
</dbReference>
<dbReference type="GO" id="GO:0031297">
    <property type="term" value="P:replication fork processing"/>
    <property type="evidence" value="ECO:0000250"/>
    <property type="project" value="UniProtKB"/>
</dbReference>
<dbReference type="FunFam" id="1.25.40.10:FF:001196">
    <property type="entry name" value="Tonsoku like, DNA repair protein"/>
    <property type="match status" value="1"/>
</dbReference>
<dbReference type="FunFam" id="1.25.40.20:FF:000151">
    <property type="entry name" value="Tonsoku like, DNA repair protein"/>
    <property type="match status" value="1"/>
</dbReference>
<dbReference type="FunFam" id="3.80.10.10:FF:000377">
    <property type="entry name" value="Tonsoku like, DNA repair protein"/>
    <property type="match status" value="1"/>
</dbReference>
<dbReference type="FunFam" id="1.25.40.10:FF:000297">
    <property type="entry name" value="tonsoku-like protein isoform X2"/>
    <property type="match status" value="1"/>
</dbReference>
<dbReference type="Gene3D" id="1.25.40.20">
    <property type="entry name" value="Ankyrin repeat-containing domain"/>
    <property type="match status" value="1"/>
</dbReference>
<dbReference type="Gene3D" id="3.80.10.10">
    <property type="entry name" value="Ribonuclease Inhibitor"/>
    <property type="match status" value="3"/>
</dbReference>
<dbReference type="Gene3D" id="1.25.40.10">
    <property type="entry name" value="Tetratricopeptide repeat domain"/>
    <property type="match status" value="2"/>
</dbReference>
<dbReference type="InterPro" id="IPR002110">
    <property type="entry name" value="Ankyrin_rpt"/>
</dbReference>
<dbReference type="InterPro" id="IPR036770">
    <property type="entry name" value="Ankyrin_rpt-contain_sf"/>
</dbReference>
<dbReference type="InterPro" id="IPR001611">
    <property type="entry name" value="Leu-rich_rpt"/>
</dbReference>
<dbReference type="InterPro" id="IPR006553">
    <property type="entry name" value="Leu-rich_rpt_Cys-con_subtyp"/>
</dbReference>
<dbReference type="InterPro" id="IPR032675">
    <property type="entry name" value="LRR_dom_sf"/>
</dbReference>
<dbReference type="InterPro" id="IPR052311">
    <property type="entry name" value="MMS22L-TONSL_complex_comp"/>
</dbReference>
<dbReference type="InterPro" id="IPR011990">
    <property type="entry name" value="TPR-like_helical_dom_sf"/>
</dbReference>
<dbReference type="InterPro" id="IPR019734">
    <property type="entry name" value="TPR_rpt"/>
</dbReference>
<dbReference type="PANTHER" id="PTHR46358">
    <property type="entry name" value="TONSOKU-LIKE PROTEIN"/>
    <property type="match status" value="1"/>
</dbReference>
<dbReference type="PANTHER" id="PTHR46358:SF1">
    <property type="entry name" value="TONSOKU-LIKE PROTEIN"/>
    <property type="match status" value="1"/>
</dbReference>
<dbReference type="Pfam" id="PF12796">
    <property type="entry name" value="Ank_2"/>
    <property type="match status" value="1"/>
</dbReference>
<dbReference type="Pfam" id="PF13516">
    <property type="entry name" value="LRR_6"/>
    <property type="match status" value="2"/>
</dbReference>
<dbReference type="PRINTS" id="PR01415">
    <property type="entry name" value="ANKYRIN"/>
</dbReference>
<dbReference type="SMART" id="SM00248">
    <property type="entry name" value="ANK"/>
    <property type="match status" value="3"/>
</dbReference>
<dbReference type="SMART" id="SM00367">
    <property type="entry name" value="LRR_CC"/>
    <property type="match status" value="2"/>
</dbReference>
<dbReference type="SMART" id="SM00368">
    <property type="entry name" value="LRR_RI"/>
    <property type="match status" value="6"/>
</dbReference>
<dbReference type="SMART" id="SM00028">
    <property type="entry name" value="TPR"/>
    <property type="match status" value="6"/>
</dbReference>
<dbReference type="SUPFAM" id="SSF48403">
    <property type="entry name" value="Ankyrin repeat"/>
    <property type="match status" value="1"/>
</dbReference>
<dbReference type="SUPFAM" id="SSF52047">
    <property type="entry name" value="RNI-like"/>
    <property type="match status" value="1"/>
</dbReference>
<dbReference type="SUPFAM" id="SSF48452">
    <property type="entry name" value="TPR-like"/>
    <property type="match status" value="3"/>
</dbReference>
<dbReference type="PROSITE" id="PS50297">
    <property type="entry name" value="ANK_REP_REGION"/>
    <property type="match status" value="1"/>
</dbReference>
<dbReference type="PROSITE" id="PS50088">
    <property type="entry name" value="ANK_REPEAT"/>
    <property type="match status" value="3"/>
</dbReference>
<gene>
    <name evidence="5" type="primary">Tonsl</name>
    <name type="synonym">Ikbr</name>
    <name type="synonym">Nfkbil2</name>
</gene>
<sequence>MTLEQELRQLSKAKARAQRNGQLCEEAVCCHQLGELLASHGRFQEALEEHQQELHLLESVQDTLGCAVAHRKIGERLAEMENYSAALKHQHLYLDLAGSLSNHTELQRAWATIGRTHLDVYDHCQSRDSLLQAQAAFEKSLAIVDEKLEGMLTQRELSEMRTRLYLNLGLTCESLQQTAQCNNYFKKSIFLAEQNHLYEDLFRARYNLGAIHWRGGQHSQAMRCLEGARECARAMKMRFMESECCMLVSQVLQDLGDFLAAKRALKKAYRLGSQKPNQRVAICQSLKYVLAVVRLQQQLQEAEGNDLQGAMAICEQLGDLFSKADDFPKASEAYQKQLHFAELLNRPDLELAVIHESLATTLGDMKDYHKAVHHYEEELRLRKGNALEEAKTWFNIGLAREEAGDAYELLAPCFQKAFGCAQQAQRYQLQRQILQHLYTVQLKLQPQEARDTEIRLQELSMAKDTEEEEEEEEEEEEEASEALETSEMELSESEDDADGLSQQLEEEEELQGCVGRRKINKWNRRNDMGETLLHRACIEGQLRRVQDLVKQGHPLNPRDYCGWTPLHEACNYGHLEIVRFLLDHGAAVDDPGGQGCDGITPLHDALNCGHFEVAELLIERGASVTLRTRKGLSPLETLQQWVKLYFRDLDLETRQKAASMERRLQMASSGQASHSSPALQTIPNNHLFDPETSPPSSPCPKPPSYTPRPPEASPAPAKVFLEETVSAVCRPRKNRHRPASSSSSSEDDDDNTNPCRPSQKRLRHSTQQGEAKTPDPSKSRETAISSACRAAYQAAIRGVGSAQSRRLVPSLPRGSNEVPAPKTALIPEEEFLAEEWLEVDTPLTRSSSSSRPSTSISDYERCPARPRTRAKQSRPASLDGWCTRTKAADASLTAEPTENSSMPRTTGPNKENCAAGQPLLLVQPPPIRVRVQIQDNLFLIPVPHSDVHSVAWLAEQAAQRYFQTCGLLPRLTLRKDGALLAPQDPIPDVLQSNDEVMAEVTSWDLPPLKDRYRRACQSLGQGEHQQVLQAMEHQSSSPSFSACSLALCQAQLTPLLRALKLHTALRELRLSGNRLGDPCATELLATLGTMPNLVLLDLSSNHLGPEGLRQLVEGSLGQTAFQNVEELDLSMNPLGDGCAQALASLLRTCPVLRTLRLQACGFSPSFFLSHQAALGSAFKDAEHLKTLSLSYNTLGAPALARVLQSLPTCTLLHLELSSVAASKSNSSLIEPVIKYLTKEGCALAHLTLSANCLSDKAVRELSRCLPSCPSLTSLDLSANPEVSCAGLEELLSALQERPQGLSFFDLSGCSIQGPLNSDLWDKILSQLQELQLCSKDLTTKDRDTLCQRLPAGACTLNQGSKLFFKCL</sequence>
<feature type="chain" id="PRO_0000403775" description="Tonsoku-like protein">
    <location>
        <begin position="1"/>
        <end position="1367"/>
    </location>
</feature>
<feature type="repeat" description="TPR 1">
    <location>
        <begin position="27"/>
        <end position="60"/>
    </location>
</feature>
<feature type="repeat" description="TPR 2">
    <location>
        <begin position="67"/>
        <end position="100"/>
    </location>
</feature>
<feature type="repeat" description="TPR 3">
    <location>
        <begin position="107"/>
        <end position="147"/>
    </location>
</feature>
<feature type="repeat" description="TPR 4">
    <location>
        <begin position="162"/>
        <end position="195"/>
    </location>
</feature>
<feature type="repeat" description="TPR 5">
    <location>
        <begin position="202"/>
        <end position="235"/>
    </location>
</feature>
<feature type="repeat" description="TPR 6">
    <location>
        <begin position="242"/>
        <end position="275"/>
    </location>
</feature>
<feature type="repeat" description="TPR 7">
    <location>
        <begin position="311"/>
        <end position="344"/>
    </location>
</feature>
<feature type="repeat" description="TPR 8">
    <location>
        <begin position="352"/>
        <end position="385"/>
    </location>
</feature>
<feature type="repeat" description="TPR 9">
    <location>
        <begin position="390"/>
        <end position="424"/>
    </location>
</feature>
<feature type="repeat" description="ANK 1">
    <location>
        <begin position="528"/>
        <end position="557"/>
    </location>
</feature>
<feature type="repeat" description="ANK 2">
    <location>
        <begin position="561"/>
        <end position="590"/>
    </location>
</feature>
<feature type="repeat" description="ANK 3">
    <location>
        <begin position="597"/>
        <end position="626"/>
    </location>
</feature>
<feature type="repeat" description="LRR 1">
    <location>
        <begin position="1062"/>
        <end position="1086"/>
    </location>
</feature>
<feature type="repeat" description="LRR 2">
    <location>
        <begin position="1090"/>
        <end position="1118"/>
    </location>
</feature>
<feature type="repeat" description="LRR 3">
    <location>
        <begin position="1121"/>
        <end position="1144"/>
    </location>
</feature>
<feature type="repeat" description="LRR 4">
    <location>
        <begin position="1181"/>
        <end position="1205"/>
    </location>
</feature>
<feature type="repeat" description="LRR 5">
    <location>
        <begin position="1240"/>
        <end position="1263"/>
    </location>
</feature>
<feature type="repeat" description="LRR 6">
    <location>
        <begin position="1268"/>
        <end position="1293"/>
    </location>
</feature>
<feature type="repeat" description="LRR 7">
    <location>
        <begin position="1324"/>
        <end position="1347"/>
    </location>
</feature>
<feature type="region of interest" description="Disordered" evidence="3">
    <location>
        <begin position="460"/>
        <end position="509"/>
    </location>
</feature>
<feature type="region of interest" description="Disordered" evidence="3">
    <location>
        <begin position="660"/>
        <end position="714"/>
    </location>
</feature>
<feature type="region of interest" description="Disordered" evidence="3">
    <location>
        <begin position="726"/>
        <end position="785"/>
    </location>
</feature>
<feature type="region of interest" description="Disordered" evidence="3">
    <location>
        <begin position="798"/>
        <end position="820"/>
    </location>
</feature>
<feature type="region of interest" description="Disordered" evidence="3">
    <location>
        <begin position="841"/>
        <end position="910"/>
    </location>
</feature>
<feature type="compositionally biased region" description="Acidic residues" evidence="3">
    <location>
        <begin position="465"/>
        <end position="509"/>
    </location>
</feature>
<feature type="compositionally biased region" description="Polar residues" evidence="3">
    <location>
        <begin position="666"/>
        <end position="684"/>
    </location>
</feature>
<feature type="compositionally biased region" description="Pro residues" evidence="3">
    <location>
        <begin position="692"/>
        <end position="713"/>
    </location>
</feature>
<feature type="compositionally biased region" description="Basic and acidic residues" evidence="3">
    <location>
        <begin position="772"/>
        <end position="781"/>
    </location>
</feature>
<feature type="compositionally biased region" description="Low complexity" evidence="3">
    <location>
        <begin position="844"/>
        <end position="857"/>
    </location>
</feature>
<feature type="compositionally biased region" description="Polar residues" evidence="3">
    <location>
        <begin position="894"/>
        <end position="909"/>
    </location>
</feature>
<feature type="modified residue" description="Omega-N-methylarginine" evidence="1">
    <location>
        <position position="797"/>
    </location>
</feature>
<comment type="function">
    <text evidence="2">Component of the MMS22L-TONSL complex, a complex that promotes homologous recombination-mediated repair of double-strand breaks (DSBs) at stalled or collapsed replication forks. The MMS22L-TONSL complex is required to maintain genome integrity during DNA replication. It mediates the assembly of RAD51 filaments on single-stranded DNA (ssDNA): the MMS22L-TONSL complex is recruited to DSBs following histone replacement by histone chaperones and eviction of the replication protein A complex (RPA/RP-A) from DSBs. Following recruitment to DSBs, the TONSL-MMS22L complex promotes recruitment of RAD51 filaments and subsequent homologous recombination. Within the complex, TONSL acts as a histone reader, which recognizes and binds newly synthesized histones following their replacement by histone chaperones. Specifically binds histone H4 lacking methylation at 'Lys-20' (H4K20me0) and histone H3.1.</text>
</comment>
<comment type="subunit">
    <text evidence="2">Component of the MMS22L-TONSL complex, a complex at least composed of MMS22L and TONSL/NFKBIL2. Interacts with the MCM complex, the FACT complex and the RPA complex. Interacts with MCM5; the interaction is direct. Binds histones, with a strong preference for histone H3.1 (histones H3.1 and H3-4/H3.1t). Interacts (via ANK repeats) with histone H4; specifically binds histone H4 lacking methylation at 'Lys-20' (H4K20me0). May interact with DNAJC9; the interaction seems to be histone-dependent.</text>
</comment>
<comment type="subcellular location">
    <subcellularLocation>
        <location evidence="2">Nucleus</location>
    </subcellularLocation>
    <subcellularLocation>
        <location evidence="2">Chromosome</location>
    </subcellularLocation>
    <subcellularLocation>
        <location evidence="2">Cytoplasm</location>
    </subcellularLocation>
    <text evidence="2">Mainly nuclear. Localizes to DNA damage sites, accumulates at stressed replication forks. Recruited to stalled or collapsed replication forks following histone replacement by histone chaperones ASF1A and the CAF-1 complex: TONSL acts as a histone reader that recognizes and binds newly synthesized histones.</text>
</comment>
<comment type="domain">
    <text evidence="2">The ANK repeats mediate the interaction with the MCM complex and histones, while the LRR repeats mediate the interaction with MMS22L.</text>
</comment>
<comment type="similarity">
    <text evidence="4">Belongs to the Tonsoku family.</text>
</comment>
<keyword id="KW-0040">ANK repeat</keyword>
<keyword id="KW-0156">Chromatin regulator</keyword>
<keyword id="KW-0158">Chromosome</keyword>
<keyword id="KW-0963">Cytoplasm</keyword>
<keyword id="KW-0227">DNA damage</keyword>
<keyword id="KW-0234">DNA repair</keyword>
<keyword id="KW-0433">Leucine-rich repeat</keyword>
<keyword id="KW-0488">Methylation</keyword>
<keyword id="KW-0539">Nucleus</keyword>
<keyword id="KW-1185">Reference proteome</keyword>
<keyword id="KW-0677">Repeat</keyword>
<keyword id="KW-0802">TPR repeat</keyword>
<name>TONSL_RAT</name>
<protein>
    <recommendedName>
        <fullName evidence="4">Tonsoku-like protein</fullName>
    </recommendedName>
    <alternativeName>
        <fullName>Inhibitor of kappa B-related protein</fullName>
        <shortName>I-kappa-B-related protein</shortName>
        <shortName>IkappaBR</shortName>
    </alternativeName>
    <alternativeName>
        <fullName>NF-kappa-B inhibitor-like protein 2</fullName>
    </alternativeName>
    <alternativeName>
        <fullName>Nuclear factor of kappa light polypeptide gene enhancer in B-cells inhibitor-like 2</fullName>
    </alternativeName>
</protein>
<evidence type="ECO:0000250" key="1">
    <source>
        <dbReference type="UniProtKB" id="Q6NZL6"/>
    </source>
</evidence>
<evidence type="ECO:0000250" key="2">
    <source>
        <dbReference type="UniProtKB" id="Q96HA7"/>
    </source>
</evidence>
<evidence type="ECO:0000256" key="3">
    <source>
        <dbReference type="SAM" id="MobiDB-lite"/>
    </source>
</evidence>
<evidence type="ECO:0000305" key="4"/>
<evidence type="ECO:0000312" key="5">
    <source>
        <dbReference type="RGD" id="1307483"/>
    </source>
</evidence>
<accession>D4A615</accession>
<proteinExistence type="inferred from homology"/>
<organism>
    <name type="scientific">Rattus norvegicus</name>
    <name type="common">Rat</name>
    <dbReference type="NCBI Taxonomy" id="10116"/>
    <lineage>
        <taxon>Eukaryota</taxon>
        <taxon>Metazoa</taxon>
        <taxon>Chordata</taxon>
        <taxon>Craniata</taxon>
        <taxon>Vertebrata</taxon>
        <taxon>Euteleostomi</taxon>
        <taxon>Mammalia</taxon>
        <taxon>Eutheria</taxon>
        <taxon>Euarchontoglires</taxon>
        <taxon>Glires</taxon>
        <taxon>Rodentia</taxon>
        <taxon>Myomorpha</taxon>
        <taxon>Muroidea</taxon>
        <taxon>Muridae</taxon>
        <taxon>Murinae</taxon>
        <taxon>Rattus</taxon>
    </lineage>
</organism>